<evidence type="ECO:0000250" key="1"/>
<evidence type="ECO:0000250" key="2">
    <source>
        <dbReference type="UniProtKB" id="O00391"/>
    </source>
</evidence>
<evidence type="ECO:0000255" key="3"/>
<evidence type="ECO:0000255" key="4">
    <source>
        <dbReference type="PROSITE-ProRule" id="PRU00654"/>
    </source>
</evidence>
<evidence type="ECO:0000255" key="5">
    <source>
        <dbReference type="PROSITE-ProRule" id="PRU00691"/>
    </source>
</evidence>
<evidence type="ECO:0000256" key="6">
    <source>
        <dbReference type="SAM" id="MobiDB-lite"/>
    </source>
</evidence>
<evidence type="ECO:0000303" key="7">
    <source>
    </source>
</evidence>
<evidence type="ECO:0000303" key="8">
    <source>
    </source>
</evidence>
<evidence type="ECO:0000305" key="9"/>
<proteinExistence type="evidence at protein level"/>
<protein>
    <recommendedName>
        <fullName>Sulfhydryl oxidase 2</fullName>
        <ecNumber>1.8.3.2</ecNumber>
    </recommendedName>
    <alternativeName>
        <fullName>Quiescin Q6-like protein 1</fullName>
    </alternativeName>
</protein>
<feature type="signal peptide" evidence="3">
    <location>
        <begin position="1"/>
        <end position="38"/>
    </location>
</feature>
<feature type="chain" id="PRO_0000249539" description="Sulfhydryl oxidase 2">
    <location>
        <begin position="39"/>
        <end position="692"/>
    </location>
</feature>
<feature type="transmembrane region" description="Helical" evidence="3">
    <location>
        <begin position="656"/>
        <end position="676"/>
    </location>
</feature>
<feature type="domain" description="Thioredoxin" evidence="5">
    <location>
        <begin position="54"/>
        <end position="172"/>
    </location>
</feature>
<feature type="domain" description="ERV/ALR sulfhydryl oxidase" evidence="4">
    <location>
        <begin position="415"/>
        <end position="524"/>
    </location>
</feature>
<feature type="region of interest" description="Disordered" evidence="6">
    <location>
        <begin position="568"/>
        <end position="607"/>
    </location>
</feature>
<feature type="compositionally biased region" description="Basic and acidic residues" evidence="6">
    <location>
        <begin position="577"/>
        <end position="586"/>
    </location>
</feature>
<feature type="active site" description="Nucleophile" evidence="1">
    <location>
        <position position="85"/>
    </location>
</feature>
<feature type="active site" description="Nucleophile" evidence="1">
    <location>
        <position position="88"/>
    </location>
</feature>
<feature type="binding site" evidence="2">
    <location>
        <position position="420"/>
    </location>
    <ligand>
        <name>FAD</name>
        <dbReference type="ChEBI" id="CHEBI:57692"/>
    </ligand>
</feature>
<feature type="binding site" evidence="2">
    <location>
        <position position="427"/>
    </location>
    <ligand>
        <name>FAD</name>
        <dbReference type="ChEBI" id="CHEBI:57692"/>
    </ligand>
</feature>
<feature type="binding site" evidence="2">
    <location>
        <position position="431"/>
    </location>
    <ligand>
        <name>FAD</name>
        <dbReference type="ChEBI" id="CHEBI:57692"/>
    </ligand>
</feature>
<feature type="binding site" evidence="2">
    <location>
        <position position="472"/>
    </location>
    <ligand>
        <name>FAD</name>
        <dbReference type="ChEBI" id="CHEBI:57692"/>
    </ligand>
</feature>
<feature type="binding site" evidence="2">
    <location>
        <position position="476"/>
    </location>
    <ligand>
        <name>FAD</name>
        <dbReference type="ChEBI" id="CHEBI:57692"/>
    </ligand>
</feature>
<feature type="binding site" evidence="2">
    <location>
        <begin position="499"/>
        <end position="506"/>
    </location>
    <ligand>
        <name>FAD</name>
        <dbReference type="ChEBI" id="CHEBI:57692"/>
    </ligand>
</feature>
<feature type="binding site" evidence="2">
    <location>
        <position position="521"/>
    </location>
    <ligand>
        <name>FAD</name>
        <dbReference type="ChEBI" id="CHEBI:57692"/>
    </ligand>
</feature>
<feature type="binding site" evidence="2">
    <location>
        <position position="524"/>
    </location>
    <ligand>
        <name>FAD</name>
        <dbReference type="ChEBI" id="CHEBI:57692"/>
    </ligand>
</feature>
<feature type="glycosylation site" description="N-linked (GlcNAc...) asparagine" evidence="3">
    <location>
        <position position="71"/>
    </location>
</feature>
<feature type="glycosylation site" description="N-linked (GlcNAc...) asparagine" evidence="3">
    <location>
        <position position="172"/>
    </location>
</feature>
<feature type="glycosylation site" description="N-linked (GlcNAc...) asparagine" evidence="3">
    <location>
        <position position="212"/>
    </location>
</feature>
<feature type="glycosylation site" description="N-linked (GlcNAc...) asparagine" evidence="3">
    <location>
        <position position="260"/>
    </location>
</feature>
<feature type="disulfide bond" description="Redox-active" evidence="4 5">
    <location>
        <begin position="85"/>
        <end position="88"/>
    </location>
</feature>
<feature type="disulfide bond" evidence="2">
    <location>
        <begin position="116"/>
        <end position="125"/>
    </location>
</feature>
<feature type="disulfide bond" evidence="4">
    <location>
        <begin position="412"/>
        <end position="424"/>
    </location>
</feature>
<feature type="disulfide bond" evidence="4">
    <location>
        <begin position="470"/>
        <end position="473"/>
    </location>
</feature>
<feature type="disulfide bond" evidence="4">
    <location>
        <begin position="530"/>
        <end position="533"/>
    </location>
</feature>
<feature type="splice variant" id="VSP_020500" description="In isoform 3." evidence="8">
    <location>
        <begin position="1"/>
        <end position="165"/>
    </location>
</feature>
<feature type="splice variant" id="VSP_020501" description="In isoform 2." evidence="7">
    <original>EWEAQGREQEEGKGLNPSGKSWRHHDTGSLRPPHILGPRTDLSKSLHHRLDLRLQSPQGPQALKEAKAVVPFLGVGFSSLDMSLCVVLYVASS</original>
    <variation>SVLRARPWLGQMARLSHVNLLPHFPVEEVSSLKPGVLCLKTNKPRSSLGVSKDEHSWSVSLRIGPI</variation>
    <location>
        <begin position="574"/>
        <end position="666"/>
    </location>
</feature>
<feature type="splice variant" id="VSP_020502" description="In isoform 2." evidence="7">
    <location>
        <begin position="667"/>
        <end position="692"/>
    </location>
</feature>
<name>QSOX2_MOUSE</name>
<organism>
    <name type="scientific">Mus musculus</name>
    <name type="common">Mouse</name>
    <dbReference type="NCBI Taxonomy" id="10090"/>
    <lineage>
        <taxon>Eukaryota</taxon>
        <taxon>Metazoa</taxon>
        <taxon>Chordata</taxon>
        <taxon>Craniata</taxon>
        <taxon>Vertebrata</taxon>
        <taxon>Euteleostomi</taxon>
        <taxon>Mammalia</taxon>
        <taxon>Eutheria</taxon>
        <taxon>Euarchontoglires</taxon>
        <taxon>Glires</taxon>
        <taxon>Rodentia</taxon>
        <taxon>Myomorpha</taxon>
        <taxon>Muroidea</taxon>
        <taxon>Muridae</taxon>
        <taxon>Murinae</taxon>
        <taxon>Mus</taxon>
        <taxon>Mus</taxon>
    </lineage>
</organism>
<dbReference type="EC" id="1.8.3.2"/>
<dbReference type="EMBL" id="AK042036">
    <property type="protein sequence ID" value="BAC31140.1"/>
    <property type="status" value="ALT_SEQ"/>
    <property type="molecule type" value="mRNA"/>
</dbReference>
<dbReference type="EMBL" id="AK140324">
    <property type="protein sequence ID" value="BAE24335.1"/>
    <property type="molecule type" value="mRNA"/>
</dbReference>
<dbReference type="EMBL" id="AK157992">
    <property type="protein sequence ID" value="BAE34304.1"/>
    <property type="molecule type" value="mRNA"/>
</dbReference>
<dbReference type="EMBL" id="AK165642">
    <property type="protein sequence ID" value="BAE38312.1"/>
    <property type="molecule type" value="mRNA"/>
</dbReference>
<dbReference type="EMBL" id="AL773595">
    <property type="status" value="NOT_ANNOTATED_CDS"/>
    <property type="molecule type" value="Genomic_DNA"/>
</dbReference>
<dbReference type="EMBL" id="BC030934">
    <property type="protein sequence ID" value="AAH30934.1"/>
    <property type="molecule type" value="mRNA"/>
</dbReference>
<dbReference type="CCDS" id="CCDS15798.1">
    <molecule id="Q3TMX7-2"/>
</dbReference>
<dbReference type="RefSeq" id="NP_001289885.1">
    <molecule id="Q3TMX7-1"/>
    <property type="nucleotide sequence ID" value="NM_001302956.1"/>
</dbReference>
<dbReference type="RefSeq" id="NP_705787.1">
    <molecule id="Q3TMX7-2"/>
    <property type="nucleotide sequence ID" value="NM_153559.3"/>
</dbReference>
<dbReference type="SMR" id="Q3TMX7"/>
<dbReference type="BioGRID" id="230654">
    <property type="interactions" value="3"/>
</dbReference>
<dbReference type="FunCoup" id="Q3TMX7">
    <property type="interactions" value="1655"/>
</dbReference>
<dbReference type="STRING" id="10090.ENSMUSP00000037128"/>
<dbReference type="GlyCosmos" id="Q3TMX7">
    <property type="glycosylation" value="4 sites, No reported glycans"/>
</dbReference>
<dbReference type="GlyGen" id="Q3TMX7">
    <property type="glycosylation" value="5 sites"/>
</dbReference>
<dbReference type="iPTMnet" id="Q3TMX7"/>
<dbReference type="PhosphoSitePlus" id="Q3TMX7"/>
<dbReference type="jPOST" id="Q3TMX7"/>
<dbReference type="PaxDb" id="10090-ENSMUSP00000037128"/>
<dbReference type="PeptideAtlas" id="Q3TMX7"/>
<dbReference type="ProteomicsDB" id="300297">
    <molecule id="Q3TMX7-1"/>
</dbReference>
<dbReference type="ProteomicsDB" id="300298">
    <molecule id="Q3TMX7-2"/>
</dbReference>
<dbReference type="ProteomicsDB" id="300299">
    <molecule id="Q3TMX7-3"/>
</dbReference>
<dbReference type="Pumba" id="Q3TMX7"/>
<dbReference type="Antibodypedia" id="2576">
    <property type="antibodies" value="104 antibodies from 19 providers"/>
</dbReference>
<dbReference type="DNASU" id="227638"/>
<dbReference type="Ensembl" id="ENSMUST00000036187.9">
    <molecule id="Q3TMX7-2"/>
    <property type="protein sequence ID" value="ENSMUSP00000037128.9"/>
    <property type="gene ID" value="ENSMUSG00000036327.19"/>
</dbReference>
<dbReference type="Ensembl" id="ENSMUST00000091263.12">
    <molecule id="Q3TMX7-3"/>
    <property type="protein sequence ID" value="ENSMUSP00000088807.6"/>
    <property type="gene ID" value="ENSMUSG00000036327.19"/>
</dbReference>
<dbReference type="GeneID" id="227638"/>
<dbReference type="KEGG" id="mmu:227638"/>
<dbReference type="UCSC" id="uc008iuj.2">
    <molecule id="Q3TMX7-2"/>
    <property type="organism name" value="mouse"/>
</dbReference>
<dbReference type="UCSC" id="uc008iuk.2">
    <molecule id="Q3TMX7-1"/>
    <property type="organism name" value="mouse"/>
</dbReference>
<dbReference type="AGR" id="MGI:2387194"/>
<dbReference type="CTD" id="169714"/>
<dbReference type="MGI" id="MGI:2387194">
    <property type="gene designation" value="Qsox2"/>
</dbReference>
<dbReference type="VEuPathDB" id="HostDB:ENSMUSG00000036327"/>
<dbReference type="eggNOG" id="KOG1731">
    <property type="taxonomic scope" value="Eukaryota"/>
</dbReference>
<dbReference type="GeneTree" id="ENSGT00940000159734"/>
<dbReference type="HOGENOM" id="CLU_020182_1_1_1"/>
<dbReference type="InParanoid" id="Q3TMX7"/>
<dbReference type="OMA" id="VFFGCKE"/>
<dbReference type="OrthoDB" id="72558at9989"/>
<dbReference type="PhylomeDB" id="Q3TMX7"/>
<dbReference type="TreeFam" id="TF316749"/>
<dbReference type="BRENDA" id="1.8.3.2">
    <property type="organism ID" value="3474"/>
</dbReference>
<dbReference type="BioGRID-ORCS" id="227638">
    <property type="hits" value="2 hits in 79 CRISPR screens"/>
</dbReference>
<dbReference type="ChiTaRS" id="Qsox2">
    <property type="organism name" value="mouse"/>
</dbReference>
<dbReference type="PRO" id="PR:Q3TMX7"/>
<dbReference type="Proteomes" id="UP000000589">
    <property type="component" value="Chromosome 2"/>
</dbReference>
<dbReference type="RNAct" id="Q3TMX7">
    <property type="molecule type" value="protein"/>
</dbReference>
<dbReference type="Bgee" id="ENSMUSG00000036327">
    <property type="expression patterns" value="Expressed in spermatocyte and 209 other cell types or tissues"/>
</dbReference>
<dbReference type="GO" id="GO:0005794">
    <property type="term" value="C:Golgi apparatus"/>
    <property type="evidence" value="ECO:0007669"/>
    <property type="project" value="Ensembl"/>
</dbReference>
<dbReference type="GO" id="GO:0016020">
    <property type="term" value="C:membrane"/>
    <property type="evidence" value="ECO:0007669"/>
    <property type="project" value="UniProtKB-SubCell"/>
</dbReference>
<dbReference type="GO" id="GO:0005654">
    <property type="term" value="C:nucleoplasm"/>
    <property type="evidence" value="ECO:0007669"/>
    <property type="project" value="Ensembl"/>
</dbReference>
<dbReference type="GO" id="GO:0016971">
    <property type="term" value="F:flavin-dependent sulfhydryl oxidase activity"/>
    <property type="evidence" value="ECO:0007669"/>
    <property type="project" value="InterPro"/>
</dbReference>
<dbReference type="CDD" id="cd02992">
    <property type="entry name" value="PDI_a_QSOX"/>
    <property type="match status" value="1"/>
</dbReference>
<dbReference type="FunFam" id="1.20.120.1960:FF:000001">
    <property type="entry name" value="Sulfhydryl oxidase"/>
    <property type="match status" value="1"/>
</dbReference>
<dbReference type="FunFam" id="1.20.120.310:FF:000001">
    <property type="entry name" value="Sulfhydryl oxidase"/>
    <property type="match status" value="1"/>
</dbReference>
<dbReference type="FunFam" id="3.40.30.10:FF:000073">
    <property type="entry name" value="Sulfhydryl oxidase"/>
    <property type="match status" value="1"/>
</dbReference>
<dbReference type="FunFam" id="3.40.30.10:FF:000080">
    <property type="entry name" value="Sulfhydryl oxidase"/>
    <property type="match status" value="1"/>
</dbReference>
<dbReference type="Gene3D" id="1.20.120.310">
    <property type="entry name" value="ERV/ALR sulfhydryl oxidase domain"/>
    <property type="match status" value="1"/>
</dbReference>
<dbReference type="Gene3D" id="3.40.30.10">
    <property type="entry name" value="Glutaredoxin"/>
    <property type="match status" value="2"/>
</dbReference>
<dbReference type="Gene3D" id="1.20.120.1960">
    <property type="entry name" value="QSOX sulfhydryl oxidase domain"/>
    <property type="match status" value="1"/>
</dbReference>
<dbReference type="InterPro" id="IPR036774">
    <property type="entry name" value="ERV/ALR_sulphydryl_oxid_sf"/>
</dbReference>
<dbReference type="InterPro" id="IPR017905">
    <property type="entry name" value="ERV/ALR_sulphydryl_oxidase"/>
</dbReference>
<dbReference type="InterPro" id="IPR040986">
    <property type="entry name" value="QSOX_FAD-bd_dom"/>
</dbReference>
<dbReference type="InterPro" id="IPR042568">
    <property type="entry name" value="QSOX_FAD-bd_sf"/>
</dbReference>
<dbReference type="InterPro" id="IPR041269">
    <property type="entry name" value="QSOX_Trx1"/>
</dbReference>
<dbReference type="InterPro" id="IPR039798">
    <property type="entry name" value="Sulfhydryl_oxidase"/>
</dbReference>
<dbReference type="InterPro" id="IPR036249">
    <property type="entry name" value="Thioredoxin-like_sf"/>
</dbReference>
<dbReference type="InterPro" id="IPR013766">
    <property type="entry name" value="Thioredoxin_domain"/>
</dbReference>
<dbReference type="PANTHER" id="PTHR22897">
    <property type="entry name" value="QUIESCIN Q6-RELATED SULFHYDRYL OXIDASE"/>
    <property type="match status" value="1"/>
</dbReference>
<dbReference type="PANTHER" id="PTHR22897:SF7">
    <property type="entry name" value="SULFHYDRYL OXIDASE 2"/>
    <property type="match status" value="1"/>
</dbReference>
<dbReference type="Pfam" id="PF04777">
    <property type="entry name" value="Evr1_Alr"/>
    <property type="match status" value="1"/>
</dbReference>
<dbReference type="Pfam" id="PF18371">
    <property type="entry name" value="FAD_SOX"/>
    <property type="match status" value="1"/>
</dbReference>
<dbReference type="Pfam" id="PF18108">
    <property type="entry name" value="QSOX_Trx1"/>
    <property type="match status" value="1"/>
</dbReference>
<dbReference type="Pfam" id="PF00085">
    <property type="entry name" value="Thioredoxin"/>
    <property type="match status" value="1"/>
</dbReference>
<dbReference type="SUPFAM" id="SSF69000">
    <property type="entry name" value="FAD-dependent thiol oxidase"/>
    <property type="match status" value="1"/>
</dbReference>
<dbReference type="SUPFAM" id="SSF52833">
    <property type="entry name" value="Thioredoxin-like"/>
    <property type="match status" value="1"/>
</dbReference>
<dbReference type="PROSITE" id="PS51324">
    <property type="entry name" value="ERV_ALR"/>
    <property type="match status" value="1"/>
</dbReference>
<dbReference type="PROSITE" id="PS51352">
    <property type="entry name" value="THIOREDOXIN_2"/>
    <property type="match status" value="1"/>
</dbReference>
<reference key="1">
    <citation type="journal article" date="2005" name="Science">
        <title>The transcriptional landscape of the mammalian genome.</title>
        <authorList>
            <person name="Carninci P."/>
            <person name="Kasukawa T."/>
            <person name="Katayama S."/>
            <person name="Gough J."/>
            <person name="Frith M.C."/>
            <person name="Maeda N."/>
            <person name="Oyama R."/>
            <person name="Ravasi T."/>
            <person name="Lenhard B."/>
            <person name="Wells C."/>
            <person name="Kodzius R."/>
            <person name="Shimokawa K."/>
            <person name="Bajic V.B."/>
            <person name="Brenner S.E."/>
            <person name="Batalov S."/>
            <person name="Forrest A.R."/>
            <person name="Zavolan M."/>
            <person name="Davis M.J."/>
            <person name="Wilming L.G."/>
            <person name="Aidinis V."/>
            <person name="Allen J.E."/>
            <person name="Ambesi-Impiombato A."/>
            <person name="Apweiler R."/>
            <person name="Aturaliya R.N."/>
            <person name="Bailey T.L."/>
            <person name="Bansal M."/>
            <person name="Baxter L."/>
            <person name="Beisel K.W."/>
            <person name="Bersano T."/>
            <person name="Bono H."/>
            <person name="Chalk A.M."/>
            <person name="Chiu K.P."/>
            <person name="Choudhary V."/>
            <person name="Christoffels A."/>
            <person name="Clutterbuck D.R."/>
            <person name="Crowe M.L."/>
            <person name="Dalla E."/>
            <person name="Dalrymple B.P."/>
            <person name="de Bono B."/>
            <person name="Della Gatta G."/>
            <person name="di Bernardo D."/>
            <person name="Down T."/>
            <person name="Engstrom P."/>
            <person name="Fagiolini M."/>
            <person name="Faulkner G."/>
            <person name="Fletcher C.F."/>
            <person name="Fukushima T."/>
            <person name="Furuno M."/>
            <person name="Futaki S."/>
            <person name="Gariboldi M."/>
            <person name="Georgii-Hemming P."/>
            <person name="Gingeras T.R."/>
            <person name="Gojobori T."/>
            <person name="Green R.E."/>
            <person name="Gustincich S."/>
            <person name="Harbers M."/>
            <person name="Hayashi Y."/>
            <person name="Hensch T.K."/>
            <person name="Hirokawa N."/>
            <person name="Hill D."/>
            <person name="Huminiecki L."/>
            <person name="Iacono M."/>
            <person name="Ikeo K."/>
            <person name="Iwama A."/>
            <person name="Ishikawa T."/>
            <person name="Jakt M."/>
            <person name="Kanapin A."/>
            <person name="Katoh M."/>
            <person name="Kawasawa Y."/>
            <person name="Kelso J."/>
            <person name="Kitamura H."/>
            <person name="Kitano H."/>
            <person name="Kollias G."/>
            <person name="Krishnan S.P."/>
            <person name="Kruger A."/>
            <person name="Kummerfeld S.K."/>
            <person name="Kurochkin I.V."/>
            <person name="Lareau L.F."/>
            <person name="Lazarevic D."/>
            <person name="Lipovich L."/>
            <person name="Liu J."/>
            <person name="Liuni S."/>
            <person name="McWilliam S."/>
            <person name="Madan Babu M."/>
            <person name="Madera M."/>
            <person name="Marchionni L."/>
            <person name="Matsuda H."/>
            <person name="Matsuzawa S."/>
            <person name="Miki H."/>
            <person name="Mignone F."/>
            <person name="Miyake S."/>
            <person name="Morris K."/>
            <person name="Mottagui-Tabar S."/>
            <person name="Mulder N."/>
            <person name="Nakano N."/>
            <person name="Nakauchi H."/>
            <person name="Ng P."/>
            <person name="Nilsson R."/>
            <person name="Nishiguchi S."/>
            <person name="Nishikawa S."/>
            <person name="Nori F."/>
            <person name="Ohara O."/>
            <person name="Okazaki Y."/>
            <person name="Orlando V."/>
            <person name="Pang K.C."/>
            <person name="Pavan W.J."/>
            <person name="Pavesi G."/>
            <person name="Pesole G."/>
            <person name="Petrovsky N."/>
            <person name="Piazza S."/>
            <person name="Reed J."/>
            <person name="Reid J.F."/>
            <person name="Ring B.Z."/>
            <person name="Ringwald M."/>
            <person name="Rost B."/>
            <person name="Ruan Y."/>
            <person name="Salzberg S.L."/>
            <person name="Sandelin A."/>
            <person name="Schneider C."/>
            <person name="Schoenbach C."/>
            <person name="Sekiguchi K."/>
            <person name="Semple C.A."/>
            <person name="Seno S."/>
            <person name="Sessa L."/>
            <person name="Sheng Y."/>
            <person name="Shibata Y."/>
            <person name="Shimada H."/>
            <person name="Shimada K."/>
            <person name="Silva D."/>
            <person name="Sinclair B."/>
            <person name="Sperling S."/>
            <person name="Stupka E."/>
            <person name="Sugiura K."/>
            <person name="Sultana R."/>
            <person name="Takenaka Y."/>
            <person name="Taki K."/>
            <person name="Tammoja K."/>
            <person name="Tan S.L."/>
            <person name="Tang S."/>
            <person name="Taylor M.S."/>
            <person name="Tegner J."/>
            <person name="Teichmann S.A."/>
            <person name="Ueda H.R."/>
            <person name="van Nimwegen E."/>
            <person name="Verardo R."/>
            <person name="Wei C.L."/>
            <person name="Yagi K."/>
            <person name="Yamanishi H."/>
            <person name="Zabarovsky E."/>
            <person name="Zhu S."/>
            <person name="Zimmer A."/>
            <person name="Hide W."/>
            <person name="Bult C."/>
            <person name="Grimmond S.M."/>
            <person name="Teasdale R.D."/>
            <person name="Liu E.T."/>
            <person name="Brusic V."/>
            <person name="Quackenbush J."/>
            <person name="Wahlestedt C."/>
            <person name="Mattick J.S."/>
            <person name="Hume D.A."/>
            <person name="Kai C."/>
            <person name="Sasaki D."/>
            <person name="Tomaru Y."/>
            <person name="Fukuda S."/>
            <person name="Kanamori-Katayama M."/>
            <person name="Suzuki M."/>
            <person name="Aoki J."/>
            <person name="Arakawa T."/>
            <person name="Iida J."/>
            <person name="Imamura K."/>
            <person name="Itoh M."/>
            <person name="Kato T."/>
            <person name="Kawaji H."/>
            <person name="Kawagashira N."/>
            <person name="Kawashima T."/>
            <person name="Kojima M."/>
            <person name="Kondo S."/>
            <person name="Konno H."/>
            <person name="Nakano K."/>
            <person name="Ninomiya N."/>
            <person name="Nishio T."/>
            <person name="Okada M."/>
            <person name="Plessy C."/>
            <person name="Shibata K."/>
            <person name="Shiraki T."/>
            <person name="Suzuki S."/>
            <person name="Tagami M."/>
            <person name="Waki K."/>
            <person name="Watahiki A."/>
            <person name="Okamura-Oho Y."/>
            <person name="Suzuki H."/>
            <person name="Kawai J."/>
            <person name="Hayashizaki Y."/>
        </authorList>
    </citation>
    <scope>NUCLEOTIDE SEQUENCE [LARGE SCALE MRNA] (ISOFORMS 1 AND 3)</scope>
    <source>
        <strain>C57BL/6J</strain>
        <tissue>Adipose tissue</tissue>
        <tissue>Inner ear</tissue>
        <tissue>Thymus</tissue>
    </source>
</reference>
<reference key="2">
    <citation type="journal article" date="2009" name="PLoS Biol.">
        <title>Lineage-specific biology revealed by a finished genome assembly of the mouse.</title>
        <authorList>
            <person name="Church D.M."/>
            <person name="Goodstadt L."/>
            <person name="Hillier L.W."/>
            <person name="Zody M.C."/>
            <person name="Goldstein S."/>
            <person name="She X."/>
            <person name="Bult C.J."/>
            <person name="Agarwala R."/>
            <person name="Cherry J.L."/>
            <person name="DiCuccio M."/>
            <person name="Hlavina W."/>
            <person name="Kapustin Y."/>
            <person name="Meric P."/>
            <person name="Maglott D."/>
            <person name="Birtle Z."/>
            <person name="Marques A.C."/>
            <person name="Graves T."/>
            <person name="Zhou S."/>
            <person name="Teague B."/>
            <person name="Potamousis K."/>
            <person name="Churas C."/>
            <person name="Place M."/>
            <person name="Herschleb J."/>
            <person name="Runnheim R."/>
            <person name="Forrest D."/>
            <person name="Amos-Landgraf J."/>
            <person name="Schwartz D.C."/>
            <person name="Cheng Z."/>
            <person name="Lindblad-Toh K."/>
            <person name="Eichler E.E."/>
            <person name="Ponting C.P."/>
        </authorList>
    </citation>
    <scope>NUCLEOTIDE SEQUENCE [LARGE SCALE GENOMIC DNA]</scope>
    <source>
        <strain>C57BL/6J</strain>
    </source>
</reference>
<reference key="3">
    <citation type="journal article" date="2004" name="Genome Res.">
        <title>The status, quality, and expansion of the NIH full-length cDNA project: the Mammalian Gene Collection (MGC).</title>
        <authorList>
            <consortium name="The MGC Project Team"/>
        </authorList>
    </citation>
    <scope>NUCLEOTIDE SEQUENCE [LARGE SCALE MRNA] (ISOFORM 2)</scope>
    <source>
        <strain>FVB/N</strain>
        <tissue>Salivary gland</tissue>
    </source>
</reference>
<reference key="4">
    <citation type="journal article" date="2010" name="Cell">
        <title>A tissue-specific atlas of mouse protein phosphorylation and expression.</title>
        <authorList>
            <person name="Huttlin E.L."/>
            <person name="Jedrychowski M.P."/>
            <person name="Elias J.E."/>
            <person name="Goswami T."/>
            <person name="Rad R."/>
            <person name="Beausoleil S.A."/>
            <person name="Villen J."/>
            <person name="Haas W."/>
            <person name="Sowa M.E."/>
            <person name="Gygi S.P."/>
        </authorList>
    </citation>
    <scope>IDENTIFICATION BY MASS SPECTROMETRY [LARGE SCALE ANALYSIS]</scope>
    <source>
        <tissue>Brown adipose tissue</tissue>
        <tissue>Pancreas</tissue>
        <tissue>Testis</tissue>
    </source>
</reference>
<keyword id="KW-0025">Alternative splicing</keyword>
<keyword id="KW-1015">Disulfide bond</keyword>
<keyword id="KW-0274">FAD</keyword>
<keyword id="KW-0285">Flavoprotein</keyword>
<keyword id="KW-0325">Glycoprotein</keyword>
<keyword id="KW-0472">Membrane</keyword>
<keyword id="KW-0560">Oxidoreductase</keyword>
<keyword id="KW-1185">Reference proteome</keyword>
<keyword id="KW-0732">Signal</keyword>
<keyword id="KW-0812">Transmembrane</keyword>
<keyword id="KW-1133">Transmembrane helix</keyword>
<comment type="function">
    <text evidence="1">Catalyzes the oxidation of sulfhydryl groups in peptide and protein thiols to disulfides with the reduction of oxygen to hydrogen peroxide. May contribute to disulfide bond formation in a variety of secreted proteins (By similarity).</text>
</comment>
<comment type="catalytic activity">
    <reaction>
        <text>2 R'C(R)SH + O2 = R'C(R)S-S(R)CR' + H2O2</text>
        <dbReference type="Rhea" id="RHEA:17357"/>
        <dbReference type="ChEBI" id="CHEBI:15379"/>
        <dbReference type="ChEBI" id="CHEBI:16240"/>
        <dbReference type="ChEBI" id="CHEBI:16520"/>
        <dbReference type="ChEBI" id="CHEBI:17412"/>
        <dbReference type="EC" id="1.8.3.2"/>
    </reaction>
</comment>
<comment type="cofactor">
    <cofactor evidence="2">
        <name>FAD</name>
        <dbReference type="ChEBI" id="CHEBI:57692"/>
    </cofactor>
    <text evidence="2">Binds 1 FAD per subunit.</text>
</comment>
<comment type="subcellular location">
    <subcellularLocation>
        <location evidence="1">Membrane</location>
        <topology evidence="1">Single-pass membrane protein</topology>
    </subcellularLocation>
</comment>
<comment type="alternative products">
    <event type="alternative splicing"/>
    <isoform>
        <id>Q3TMX7-1</id>
        <name>1</name>
        <sequence type="displayed"/>
    </isoform>
    <isoform>
        <id>Q3TMX7-2</id>
        <name>2</name>
        <sequence type="described" ref="VSP_020501 VSP_020502"/>
    </isoform>
    <isoform>
        <id>Q3TMX7-3</id>
        <name>3</name>
        <sequence type="described" ref="VSP_020500"/>
    </isoform>
</comment>
<comment type="similarity">
    <text evidence="9">Belongs to the quiescin-sulfhydryl oxidase (QSOX) family.</text>
</comment>
<sequence>MAAARAVARDPGAYARQPPSLRAARLPRLLFLLAVVAAVGPREGGGARLYREGSDAVWLLDSGSVRSATGNSSAAWLVQFHSSWCGHCIGYAPTWRALAADVRDWAAAIRVAALDCAEEKNQDVCRTYDIHFYPTFRYFKAFTKEFTTGENFKGPDRELRTVRQTMIDFLQNHTEGTWPPACPPLDPIQSSDILSFMDSHSGQYHAIVFESNGSYVGREVILDLIPYENIMVSRALDTDKAFLGTLGITSVPSCYLIYPNGSHGLVNVAKPLRSFFSSHLKSLPDVRKKSLFLPEKSNKEEKSEVVVWKEFDRAKLYTADLESGLHYLLRVELAAHRSLAGAQLKTFRDFVTVVAKLFPGRPAVKKLLETLQEWLANLPLDKIPYNAILDLVNNKMQISGIFLTSHVKWVGCQGSRLELRGYPCSLWKLFHTLTVQASTHPEALAGTGFEGHPQAVLQAIRRYIRTFFGCKECGEHFEEMAKESMDSVKTPDQAVLWLWRKHNMVNSRLAGHLSEDPKFPKVPWPTPDLCPACHEEIKGLDSWNEGQVLLFLKQHYSRDNLVDAYSVDQGSPGEWEAQGREQEEGKGLNPSGKSWRHHDTGSLRPPHILGPRTDLSKSLHHRLDLRLQSPQGPQALKEAKAVVPFLGVGFSSLDMSLCVVLYVASSLFLMIMYFFFRVRSKRWKVRLYHPAV</sequence>
<accession>Q3TMX7</accession>
<accession>A2ALE0</accession>
<accession>A2ALE1</accession>
<accession>Q3TZA5</accession>
<accession>Q8C9I4</accession>
<accession>Q8K0M2</accession>
<gene>
    <name type="primary">Qsox2</name>
    <name type="synonym">Qscn6l1</name>
</gene>